<proteinExistence type="predicted"/>
<evidence type="ECO:0000269" key="1">
    <source>
    </source>
</evidence>
<evidence type="ECO:0000303" key="2">
    <source>
    </source>
</evidence>
<evidence type="ECO:0000305" key="3"/>
<evidence type="ECO:0000312" key="4">
    <source>
        <dbReference type="EMBL" id="AGN35228.1"/>
    </source>
</evidence>
<comment type="function">
    <text evidence="1">Component of antiviral defense system DISARM (defense island system associated with restriction-modification), composed of DrmE, DrmA, DrmB, DrmC and DrmMII. DISARM is probably a multi-gene restriction module, this subunit has an unknown function. Expression of DISARM in B.subtilis (strain BEST7003) confers resistance to phages Nf, phi29, phi105, phi3T, SPO1, SPR and SPP1. Protection is over 10(7)-fold against phi3T, 10(4)-10(5)-fold against Nf, phi29, phi105 and SPR, 100-fold against SPO1 and 10-fold against SPP1. DISARM does not interfere with phage adsorption, but instead interferes with (phi3T) DNA replication early in its cycle, preventing replication, circularization and lysogeny and probably causes phage DNA degradation (DNA is degraded in SPP1-infected cells).</text>
</comment>
<comment type="subcellular location">
    <subcellularLocation>
        <location evidence="3">Cytoplasm</location>
    </subcellularLocation>
</comment>
<comment type="disruption phenotype">
    <text evidence="1">When this gene is missing the DISARM system does not confer Nf, phi3T or SPO1 resistance in B.subtilis.</text>
</comment>
<gene>
    <name evidence="2" type="primary">drmB</name>
    <name evidence="4" type="ordered locus">BaLi_c08330</name>
</gene>
<accession>P0DW06</accession>
<organism>
    <name type="scientific">Bacillus paralicheniformis (strain ATCC 9945a / NCIMB 11709 / CD-2)</name>
    <dbReference type="NCBI Taxonomy" id="766760"/>
    <lineage>
        <taxon>Bacteria</taxon>
        <taxon>Bacillati</taxon>
        <taxon>Bacillota</taxon>
        <taxon>Bacilli</taxon>
        <taxon>Bacillales</taxon>
        <taxon>Bacillaceae</taxon>
        <taxon>Bacillus</taxon>
    </lineage>
</organism>
<feature type="chain" id="PRO_0000456309" description="DISARM protein DrmB">
    <location>
        <begin position="1"/>
        <end position="561"/>
    </location>
</feature>
<protein>
    <recommendedName>
        <fullName evidence="2">DISARM protein DrmB</fullName>
    </recommendedName>
</protein>
<sequence length="561" mass="64343">MDSVNDSLVILDIKYWTNHNNKKIFDKNLMKFLKKDYFRKIPSTKHKDLPAIPFPNYHVCSNVKCSRLFDLRDNFVMSDYLKGGPKCPDCSRKSYPARFVVSCQENHLDDFPWRWWAHGKQDTECKGKLRLWSTGNTSSLDSLYVECECKKKKSLRGAMQDSSFENYKCTGNHPHKLNEKSNCNEPVIPLQRGASNVYFPALRSAIVIPSNASEDNNLDDFFTSVKEVINTYADLIGENWHYKFYSDRLTGHSEFSDAEDFIAKWTSYLNSNDSEEEIEYNQIKEAEYRAFTAFDRKVKMGDFEAEVETVPDDFQPYFNRIVKAHRLKEILVLLGFMRNDSPEPDVNEPKKIVWLESDGYENWLPAIEVHGEGIFIEFNHTTISKWLEENSELPKRSEKFSSLYASWIESKGWEVRDEKDIVYVMLHTFAHLLIKQLSLQSGYSSVAIKERIYCGKNMAGVLLYTGSTDQEGSLGGLVEMGSIDKLRPLIVDALEEAIFCSNDPSCASLEPSEDNQLNGCACFACSMVAETSCETGNRLLDRSLLVKTIDSKYSPFFKGLL</sequence>
<dbReference type="EMBL" id="CP005965">
    <property type="protein sequence ID" value="AGN35228.1"/>
    <property type="molecule type" value="Genomic_DNA"/>
</dbReference>
<dbReference type="SMR" id="P0DW06"/>
<dbReference type="KEGG" id="blh:BaLi_c08330"/>
<dbReference type="GO" id="GO:0005737">
    <property type="term" value="C:cytoplasm"/>
    <property type="evidence" value="ECO:0007669"/>
    <property type="project" value="UniProtKB-SubCell"/>
</dbReference>
<dbReference type="GO" id="GO:0051607">
    <property type="term" value="P:defense response to virus"/>
    <property type="evidence" value="ECO:0007669"/>
    <property type="project" value="UniProtKB-KW"/>
</dbReference>
<dbReference type="GO" id="GO:0009307">
    <property type="term" value="P:DNA restriction-modification system"/>
    <property type="evidence" value="ECO:0007669"/>
    <property type="project" value="UniProtKB-KW"/>
</dbReference>
<dbReference type="InterPro" id="IPR047721">
    <property type="entry name" value="DrmB"/>
</dbReference>
<dbReference type="InterPro" id="IPR018973">
    <property type="entry name" value="MZB"/>
</dbReference>
<dbReference type="NCBIfam" id="NF038324">
    <property type="entry name" value="DrmB_fam"/>
    <property type="match status" value="1"/>
</dbReference>
<dbReference type="Pfam" id="PF09369">
    <property type="entry name" value="MZB"/>
    <property type="match status" value="1"/>
</dbReference>
<keyword id="KW-0051">Antiviral defense</keyword>
<keyword id="KW-0963">Cytoplasm</keyword>
<keyword id="KW-0680">Restriction system</keyword>
<reference key="1">
    <citation type="journal article" date="2013" name="Genome Announc.">
        <title>First Insights into the Completely Annotated Genome Sequence of Bacillus licheniformis Strain 9945A.</title>
        <authorList>
            <person name="Rachinger M."/>
            <person name="Volland S."/>
            <person name="Meinhardt F."/>
            <person name="Daniel R."/>
            <person name="Liesegang H."/>
        </authorList>
    </citation>
    <scope>NUCLEOTIDE SEQUENCE [LARGE SCALE GENOMIC DNA]</scope>
    <source>
        <strain>ATCC 9945a / NCIMB 11709 / CD-2</strain>
    </source>
</reference>
<reference key="2">
    <citation type="journal article" date="2018" name="Nat. Microbiol.">
        <title>DISARM is a widespread bacterial defence system with broad anti-phage activities.</title>
        <authorList>
            <person name="Ofir G."/>
            <person name="Melamed S."/>
            <person name="Sberro H."/>
            <person name="Mukamel Z."/>
            <person name="Silverman S."/>
            <person name="Yaakov G."/>
            <person name="Doron S."/>
            <person name="Sorek R."/>
        </authorList>
    </citation>
    <scope>FUNCTION</scope>
    <scope>DISRUPTION PHENOTYPE</scope>
    <scope>EXPRESSION IN B.SUBTILIS</scope>
    <source>
        <strain>ATCC 9945a / NCIMB 11709 / CD-2</strain>
    </source>
</reference>
<name>DRMB_BACP9</name>